<protein>
    <recommendedName>
        <fullName evidence="1">Chaperonin GroEL 2</fullName>
        <ecNumber evidence="1">5.6.1.7</ecNumber>
    </recommendedName>
    <alternativeName>
        <fullName evidence="1">60 kDa chaperonin 2</fullName>
    </alternativeName>
    <alternativeName>
        <fullName evidence="1">Chaperonin-60 2</fullName>
        <shortName evidence="1">Cpn60 2</shortName>
    </alternativeName>
</protein>
<name>CH602_SYNJA</name>
<reference key="1">
    <citation type="journal article" date="2007" name="ISME J.">
        <title>Population level functional diversity in a microbial community revealed by comparative genomic and metagenomic analyses.</title>
        <authorList>
            <person name="Bhaya D."/>
            <person name="Grossman A.R."/>
            <person name="Steunou A.-S."/>
            <person name="Khuri N."/>
            <person name="Cohan F.M."/>
            <person name="Hamamura N."/>
            <person name="Melendrez M.C."/>
            <person name="Bateson M.M."/>
            <person name="Ward D.M."/>
            <person name="Heidelberg J.F."/>
        </authorList>
    </citation>
    <scope>NUCLEOTIDE SEQUENCE [LARGE SCALE GENOMIC DNA]</scope>
    <source>
        <strain>JA-3-3Ab</strain>
    </source>
</reference>
<gene>
    <name evidence="1" type="primary">groEL2</name>
    <name evidence="1" type="synonym">groL2</name>
    <name type="ordered locus">CYA_1407</name>
</gene>
<dbReference type="EC" id="5.6.1.7" evidence="1"/>
<dbReference type="EMBL" id="CP000239">
    <property type="protein sequence ID" value="ABC99577.1"/>
    <property type="molecule type" value="Genomic_DNA"/>
</dbReference>
<dbReference type="SMR" id="Q2JUN7"/>
<dbReference type="STRING" id="321327.CYA_1407"/>
<dbReference type="KEGG" id="cya:CYA_1407"/>
<dbReference type="eggNOG" id="COG0459">
    <property type="taxonomic scope" value="Bacteria"/>
</dbReference>
<dbReference type="HOGENOM" id="CLU_016503_3_0_3"/>
<dbReference type="OrthoDB" id="9766614at2"/>
<dbReference type="Proteomes" id="UP000008818">
    <property type="component" value="Chromosome"/>
</dbReference>
<dbReference type="GO" id="GO:0005737">
    <property type="term" value="C:cytoplasm"/>
    <property type="evidence" value="ECO:0007669"/>
    <property type="project" value="UniProtKB-SubCell"/>
</dbReference>
<dbReference type="GO" id="GO:0005524">
    <property type="term" value="F:ATP binding"/>
    <property type="evidence" value="ECO:0007669"/>
    <property type="project" value="UniProtKB-UniRule"/>
</dbReference>
<dbReference type="GO" id="GO:0140662">
    <property type="term" value="F:ATP-dependent protein folding chaperone"/>
    <property type="evidence" value="ECO:0007669"/>
    <property type="project" value="InterPro"/>
</dbReference>
<dbReference type="GO" id="GO:0016853">
    <property type="term" value="F:isomerase activity"/>
    <property type="evidence" value="ECO:0007669"/>
    <property type="project" value="UniProtKB-KW"/>
</dbReference>
<dbReference type="GO" id="GO:0051082">
    <property type="term" value="F:unfolded protein binding"/>
    <property type="evidence" value="ECO:0007669"/>
    <property type="project" value="UniProtKB-UniRule"/>
</dbReference>
<dbReference type="GO" id="GO:0042026">
    <property type="term" value="P:protein refolding"/>
    <property type="evidence" value="ECO:0007669"/>
    <property type="project" value="UniProtKB-UniRule"/>
</dbReference>
<dbReference type="CDD" id="cd03344">
    <property type="entry name" value="GroEL"/>
    <property type="match status" value="1"/>
</dbReference>
<dbReference type="FunFam" id="3.50.7.10:FF:000001">
    <property type="entry name" value="60 kDa chaperonin"/>
    <property type="match status" value="1"/>
</dbReference>
<dbReference type="Gene3D" id="3.50.7.10">
    <property type="entry name" value="GroEL"/>
    <property type="match status" value="1"/>
</dbReference>
<dbReference type="Gene3D" id="1.10.560.10">
    <property type="entry name" value="GroEL-like equatorial domain"/>
    <property type="match status" value="1"/>
</dbReference>
<dbReference type="Gene3D" id="3.30.260.10">
    <property type="entry name" value="TCP-1-like chaperonin intermediate domain"/>
    <property type="match status" value="1"/>
</dbReference>
<dbReference type="HAMAP" id="MF_00600">
    <property type="entry name" value="CH60"/>
    <property type="match status" value="1"/>
</dbReference>
<dbReference type="InterPro" id="IPR018370">
    <property type="entry name" value="Chaperonin_Cpn60_CS"/>
</dbReference>
<dbReference type="InterPro" id="IPR001844">
    <property type="entry name" value="Cpn60/GroEL"/>
</dbReference>
<dbReference type="InterPro" id="IPR002423">
    <property type="entry name" value="Cpn60/GroEL/TCP-1"/>
</dbReference>
<dbReference type="InterPro" id="IPR027409">
    <property type="entry name" value="GroEL-like_apical_dom_sf"/>
</dbReference>
<dbReference type="InterPro" id="IPR027413">
    <property type="entry name" value="GROEL-like_equatorial_sf"/>
</dbReference>
<dbReference type="InterPro" id="IPR027410">
    <property type="entry name" value="TCP-1-like_intermed_sf"/>
</dbReference>
<dbReference type="NCBIfam" id="TIGR02348">
    <property type="entry name" value="GroEL"/>
    <property type="match status" value="1"/>
</dbReference>
<dbReference type="NCBIfam" id="NF000592">
    <property type="entry name" value="PRK00013.1"/>
    <property type="match status" value="1"/>
</dbReference>
<dbReference type="NCBIfam" id="NF009487">
    <property type="entry name" value="PRK12849.1"/>
    <property type="match status" value="1"/>
</dbReference>
<dbReference type="NCBIfam" id="NF009488">
    <property type="entry name" value="PRK12850.1"/>
    <property type="match status" value="1"/>
</dbReference>
<dbReference type="NCBIfam" id="NF009489">
    <property type="entry name" value="PRK12851.1"/>
    <property type="match status" value="1"/>
</dbReference>
<dbReference type="PANTHER" id="PTHR45633">
    <property type="entry name" value="60 KDA HEAT SHOCK PROTEIN, MITOCHONDRIAL"/>
    <property type="match status" value="1"/>
</dbReference>
<dbReference type="Pfam" id="PF00118">
    <property type="entry name" value="Cpn60_TCP1"/>
    <property type="match status" value="1"/>
</dbReference>
<dbReference type="PRINTS" id="PR00298">
    <property type="entry name" value="CHAPERONIN60"/>
</dbReference>
<dbReference type="SUPFAM" id="SSF52029">
    <property type="entry name" value="GroEL apical domain-like"/>
    <property type="match status" value="1"/>
</dbReference>
<dbReference type="SUPFAM" id="SSF48592">
    <property type="entry name" value="GroEL equatorial domain-like"/>
    <property type="match status" value="2"/>
</dbReference>
<dbReference type="PROSITE" id="PS00296">
    <property type="entry name" value="CHAPERONINS_CPN60"/>
    <property type="match status" value="1"/>
</dbReference>
<comment type="function">
    <text evidence="1">Together with its co-chaperonin GroES, plays an essential role in assisting protein folding. The GroEL-GroES system forms a nano-cage that allows encapsulation of the non-native substrate proteins and provides a physical environment optimized to promote and accelerate protein folding.</text>
</comment>
<comment type="catalytic activity">
    <reaction evidence="1">
        <text>ATP + H2O + a folded polypeptide = ADP + phosphate + an unfolded polypeptide.</text>
        <dbReference type="EC" id="5.6.1.7"/>
    </reaction>
</comment>
<comment type="subunit">
    <text evidence="1">Forms a cylinder of 14 subunits composed of two heptameric rings stacked back-to-back. Interacts with the co-chaperonin GroES.</text>
</comment>
<comment type="subcellular location">
    <subcellularLocation>
        <location evidence="1">Cytoplasm</location>
    </subcellularLocation>
</comment>
<comment type="similarity">
    <text evidence="1">Belongs to the chaperonin (HSP60) family.</text>
</comment>
<feature type="chain" id="PRO_0000257009" description="Chaperonin GroEL 2">
    <location>
        <begin position="1"/>
        <end position="544"/>
    </location>
</feature>
<feature type="region of interest" description="Disordered" evidence="2">
    <location>
        <begin position="525"/>
        <end position="544"/>
    </location>
</feature>
<feature type="compositionally biased region" description="Gly residues" evidence="2">
    <location>
        <begin position="533"/>
        <end position="544"/>
    </location>
</feature>
<feature type="binding site" evidence="1">
    <location>
        <begin position="29"/>
        <end position="32"/>
    </location>
    <ligand>
        <name>ATP</name>
        <dbReference type="ChEBI" id="CHEBI:30616"/>
    </ligand>
</feature>
<feature type="binding site" evidence="1">
    <location>
        <begin position="86"/>
        <end position="90"/>
    </location>
    <ligand>
        <name>ATP</name>
        <dbReference type="ChEBI" id="CHEBI:30616"/>
    </ligand>
</feature>
<feature type="binding site" evidence="1">
    <location>
        <position position="413"/>
    </location>
    <ligand>
        <name>ATP</name>
        <dbReference type="ChEBI" id="CHEBI:30616"/>
    </ligand>
</feature>
<feature type="binding site" evidence="1">
    <location>
        <position position="495"/>
    </location>
    <ligand>
        <name>ATP</name>
        <dbReference type="ChEBI" id="CHEBI:30616"/>
    </ligand>
</feature>
<organism>
    <name type="scientific">Synechococcus sp. (strain JA-3-3Ab)</name>
    <name type="common">Cyanobacteria bacterium Yellowstone A-Prime</name>
    <dbReference type="NCBI Taxonomy" id="321327"/>
    <lineage>
        <taxon>Bacteria</taxon>
        <taxon>Bacillati</taxon>
        <taxon>Cyanobacteriota</taxon>
        <taxon>Cyanophyceae</taxon>
        <taxon>Synechococcales</taxon>
        <taxon>Synechococcaceae</taxon>
        <taxon>Synechococcus</taxon>
    </lineage>
</organism>
<accession>Q2JUN7</accession>
<evidence type="ECO:0000255" key="1">
    <source>
        <dbReference type="HAMAP-Rule" id="MF_00600"/>
    </source>
</evidence>
<evidence type="ECO:0000256" key="2">
    <source>
        <dbReference type="SAM" id="MobiDB-lite"/>
    </source>
</evidence>
<proteinExistence type="inferred from homology"/>
<keyword id="KW-0067">ATP-binding</keyword>
<keyword id="KW-0143">Chaperone</keyword>
<keyword id="KW-0963">Cytoplasm</keyword>
<keyword id="KW-0413">Isomerase</keyword>
<keyword id="KW-0547">Nucleotide-binding</keyword>
<sequence>MAKSIIFSEEARRALEHGMDILAEAVAVTLGPKGRNVVLEKKFGAPQIVNDGVTIAKEIELEDHIENTGVSLIRQAASKTNDTAGDGTTTATVLAHAMVKEGLKNVAAGANPIALKRGIDKAVKFLVDKIAEHARPVEDSKAIAQVAAISAGNDEEVGRMIAEAMDKVGREGVISLEEGKSMTTELEVTEGMRFDKGYISPYFVTDTERMEAVLENPYILITDKKITLVQDLVPVLEQVARAGRPLLIIAEDIEKEALATLVVNKLRGVLSVVAVKAPGFGDRRKAMLEDIAILTGGEVISEERGLKLENARLDSFGSARRVTVTKDHTTIVAEGNEAAVKARCEQIRRQIEETDSTYDKEKLQERLAKLSGGVAVIKVGAATETEMKDRKLRLEDAINATKAAVEEGIVPGGGTTLAHLMPAVTEWAQANLSGDELVGAMLVARALGAPLRRIAENAGQNGSIVLERVKEKPFTVGYDAQNDAYVDMFEAGIVDPAKVTRSALQNAASIASMVLTTEAIVVDKPEPKSNKPAGGGGGVDDYDY</sequence>